<name>GLNB_PORPU</name>
<dbReference type="EMBL" id="U38804">
    <property type="protein sequence ID" value="AAC08140.1"/>
    <property type="molecule type" value="Genomic_DNA"/>
</dbReference>
<dbReference type="PIR" id="S73175">
    <property type="entry name" value="S73175"/>
</dbReference>
<dbReference type="RefSeq" id="NP_053864.1">
    <property type="nucleotide sequence ID" value="NC_000925.1"/>
</dbReference>
<dbReference type="SMR" id="P51254"/>
<dbReference type="GeneID" id="809883"/>
<dbReference type="GO" id="GO:0009507">
    <property type="term" value="C:chloroplast"/>
    <property type="evidence" value="ECO:0007669"/>
    <property type="project" value="UniProtKB-SubCell"/>
</dbReference>
<dbReference type="GO" id="GO:0005829">
    <property type="term" value="C:cytosol"/>
    <property type="evidence" value="ECO:0007669"/>
    <property type="project" value="TreeGrafter"/>
</dbReference>
<dbReference type="GO" id="GO:0005524">
    <property type="term" value="F:ATP binding"/>
    <property type="evidence" value="ECO:0007669"/>
    <property type="project" value="TreeGrafter"/>
</dbReference>
<dbReference type="GO" id="GO:0030234">
    <property type="term" value="F:enzyme regulator activity"/>
    <property type="evidence" value="ECO:0007669"/>
    <property type="project" value="InterPro"/>
</dbReference>
<dbReference type="GO" id="GO:0006808">
    <property type="term" value="P:regulation of nitrogen utilization"/>
    <property type="evidence" value="ECO:0007669"/>
    <property type="project" value="InterPro"/>
</dbReference>
<dbReference type="Gene3D" id="3.30.70.120">
    <property type="match status" value="1"/>
</dbReference>
<dbReference type="InterPro" id="IPR002187">
    <property type="entry name" value="N-reg_PII"/>
</dbReference>
<dbReference type="InterPro" id="IPR011322">
    <property type="entry name" value="N-reg_PII-like_a/b"/>
</dbReference>
<dbReference type="InterPro" id="IPR015867">
    <property type="entry name" value="N-reg_PII/ATP_PRibTrfase_C"/>
</dbReference>
<dbReference type="InterPro" id="IPR017918">
    <property type="entry name" value="N-reg_PII_CS"/>
</dbReference>
<dbReference type="InterPro" id="IPR002332">
    <property type="entry name" value="N-reg_PII_urydylation_site"/>
</dbReference>
<dbReference type="PANTHER" id="PTHR30115">
    <property type="entry name" value="NITROGEN REGULATORY PROTEIN P-II"/>
    <property type="match status" value="1"/>
</dbReference>
<dbReference type="PANTHER" id="PTHR30115:SF11">
    <property type="entry name" value="NITROGEN REGULATORY PROTEIN P-II HOMOLOG"/>
    <property type="match status" value="1"/>
</dbReference>
<dbReference type="Pfam" id="PF00543">
    <property type="entry name" value="P-II"/>
    <property type="match status" value="1"/>
</dbReference>
<dbReference type="PRINTS" id="PR00340">
    <property type="entry name" value="PIIGLNB"/>
</dbReference>
<dbReference type="SMART" id="SM00938">
    <property type="entry name" value="P-II"/>
    <property type="match status" value="1"/>
</dbReference>
<dbReference type="SUPFAM" id="SSF54913">
    <property type="entry name" value="GlnB-like"/>
    <property type="match status" value="1"/>
</dbReference>
<dbReference type="PROSITE" id="PS00638">
    <property type="entry name" value="PII_GLNB_CTER"/>
    <property type="match status" value="1"/>
</dbReference>
<dbReference type="PROSITE" id="PS51343">
    <property type="entry name" value="PII_GLNB_DOM"/>
    <property type="match status" value="1"/>
</dbReference>
<dbReference type="PROSITE" id="PS00496">
    <property type="entry name" value="PII_GLNB_UMP"/>
    <property type="match status" value="1"/>
</dbReference>
<accession>P51254</accession>
<keyword id="KW-0150">Chloroplast</keyword>
<keyword id="KW-0547">Nucleotide-binding</keyword>
<keyword id="KW-0597">Phosphoprotein</keyword>
<keyword id="KW-0934">Plastid</keyword>
<keyword id="KW-0804">Transcription</keyword>
<keyword id="KW-0805">Transcription regulation</keyword>
<feature type="chain" id="PRO_0000139799" description="Nitrogen regulatory protein P-II">
    <location>
        <begin position="1"/>
        <end position="112"/>
    </location>
</feature>
<feature type="modified residue" description="O-UMP-tyrosine" evidence="2">
    <location>
        <position position="51"/>
    </location>
</feature>
<comment type="function">
    <text evidence="1">P-II indirectly controls the transcription of the glutamine synthetase gene (glnA). P-II prevents NR-II-catalyzed conversion of NR-I to NR-I-phosphate, the transcriptional activator of glnA. When P-II is uridylylated to P-II-UMP, these events are reversed. When the ratio of Gln to 2-ketoglutarate decreases, P-II is uridylylated to P-II-UMP, which causes the deadenylation of glutamine synthetase, so activating the enzyme (By similarity).</text>
</comment>
<comment type="subunit">
    <text evidence="1">Homotrimer.</text>
</comment>
<comment type="subcellular location">
    <subcellularLocation>
        <location>Plastid</location>
        <location>Chloroplast</location>
    </subcellularLocation>
</comment>
<comment type="similarity">
    <text evidence="2">Belongs to the P(II) protein family.</text>
</comment>
<reference key="1">
    <citation type="journal article" date="1995" name="Plant Mol. Biol. Rep.">
        <title>Complete nucleotide sequence of the Porphyra purpurea chloroplast genome.</title>
        <authorList>
            <person name="Reith M.E."/>
            <person name="Munholland J."/>
        </authorList>
    </citation>
    <scope>NUCLEOTIDE SEQUENCE [LARGE SCALE GENOMIC DNA]</scope>
    <source>
        <strain>Avonport</strain>
    </source>
</reference>
<gene>
    <name type="primary">glnB</name>
</gene>
<organism>
    <name type="scientific">Porphyra purpurea</name>
    <name type="common">Red seaweed</name>
    <name type="synonym">Ulva purpurea</name>
    <dbReference type="NCBI Taxonomy" id="2787"/>
    <lineage>
        <taxon>Eukaryota</taxon>
        <taxon>Rhodophyta</taxon>
        <taxon>Bangiophyceae</taxon>
        <taxon>Bangiales</taxon>
        <taxon>Bangiaceae</taxon>
        <taxon>Porphyra</taxon>
    </lineage>
</organism>
<evidence type="ECO:0000250" key="1"/>
<evidence type="ECO:0000255" key="2">
    <source>
        <dbReference type="PROSITE-ProRule" id="PRU00675"/>
    </source>
</evidence>
<sequence length="112" mass="12320">MKKIEAIIRPFKLNEVKLALVKGGIGGMTVVKVSGFGRQKGQTERYKGSEYSIDIIDKIKIEIIVSDDKVNSITEIIIKTAKTGEIGDGKIFISDVEQVIRIRTNDLNSAAL</sequence>
<proteinExistence type="inferred from homology"/>
<protein>
    <recommendedName>
        <fullName>Nitrogen regulatory protein P-II</fullName>
    </recommendedName>
</protein>
<geneLocation type="chloroplast"/>